<reference key="1">
    <citation type="journal article" date="2010" name="PLoS Genet.">
        <title>Analysis of the Legionella longbeachae genome and transcriptome uncovers unique strategies to cause Legionnaires' disease.</title>
        <authorList>
            <person name="Cazalet C."/>
            <person name="Gomez-Valero L."/>
            <person name="Rusniok C."/>
            <person name="Lomma M."/>
            <person name="Dervins-Ravault D."/>
            <person name="Newton H.J."/>
            <person name="Sansom F.M."/>
            <person name="Jarraud S."/>
            <person name="Zidane N."/>
            <person name="Ma L."/>
            <person name="Bouchier C."/>
            <person name="Etienne J."/>
            <person name="Hartland E.L."/>
            <person name="Buchrieser C."/>
        </authorList>
    </citation>
    <scope>NUCLEOTIDE SEQUENCE [LARGE SCALE GENOMIC DNA]</scope>
    <source>
        <strain>NSW150</strain>
    </source>
</reference>
<accession>D3HNB4</accession>
<evidence type="ECO:0000255" key="1">
    <source>
        <dbReference type="HAMAP-Rule" id="MF_00837"/>
    </source>
</evidence>
<evidence type="ECO:0000256" key="2">
    <source>
        <dbReference type="SAM" id="MobiDB-lite"/>
    </source>
</evidence>
<feature type="signal peptide" evidence="1">
    <location>
        <begin position="1"/>
        <end position="23"/>
    </location>
</feature>
<feature type="chain" id="PRO_0000414457" description="Lipid A acyltransferase PagP">
    <location>
        <begin position="24"/>
        <end position="231"/>
    </location>
</feature>
<feature type="region of interest" description="Disordered" evidence="2">
    <location>
        <begin position="24"/>
        <end position="59"/>
    </location>
</feature>
<feature type="compositionally biased region" description="Low complexity" evidence="2">
    <location>
        <begin position="24"/>
        <end position="43"/>
    </location>
</feature>
<feature type="active site" evidence="1">
    <location>
        <position position="100"/>
    </location>
</feature>
<feature type="active site" evidence="1">
    <location>
        <position position="145"/>
    </location>
</feature>
<feature type="active site" evidence="1">
    <location>
        <position position="146"/>
    </location>
</feature>
<comment type="function">
    <text evidence="1">Transfers a fatty acid residue from the sn-1 position of a phospholipid to the N-linked hydroxyfatty acid chain on the proximal unit of lipid A or its precursors.</text>
</comment>
<comment type="catalytic activity">
    <reaction evidence="1">
        <text>a lipid A + a 1,2-diacyl-sn-glycero-3-phosphocholine = a hepta-acyl lipid A + a 2-acyl-sn-glycero-3-phosphocholine</text>
        <dbReference type="Rhea" id="RHEA:74275"/>
        <dbReference type="ChEBI" id="CHEBI:57643"/>
        <dbReference type="ChEBI" id="CHEBI:57875"/>
        <dbReference type="ChEBI" id="CHEBI:193141"/>
        <dbReference type="ChEBI" id="CHEBI:193142"/>
        <dbReference type="EC" id="2.3.1.251"/>
    </reaction>
</comment>
<comment type="catalytic activity">
    <reaction evidence="1">
        <text>a lipid IVA + a 1,2-diacyl-sn-glycero-3-phosphocholine = a lipid IVB + a 2-acyl-sn-glycero-3-phosphocholine</text>
        <dbReference type="Rhea" id="RHEA:74279"/>
        <dbReference type="ChEBI" id="CHEBI:57643"/>
        <dbReference type="ChEBI" id="CHEBI:57875"/>
        <dbReference type="ChEBI" id="CHEBI:176425"/>
        <dbReference type="ChEBI" id="CHEBI:193143"/>
        <dbReference type="EC" id="2.3.1.251"/>
    </reaction>
</comment>
<comment type="catalytic activity">
    <reaction evidence="1">
        <text>a lipid IIA + a 1,2-diacyl-sn-glycero-3-phosphocholine = a lipid IIB + a 2-acyl-sn-glycero-3-phosphocholine</text>
        <dbReference type="Rhea" id="RHEA:74283"/>
        <dbReference type="ChEBI" id="CHEBI:57643"/>
        <dbReference type="ChEBI" id="CHEBI:57875"/>
        <dbReference type="ChEBI" id="CHEBI:193144"/>
        <dbReference type="ChEBI" id="CHEBI:193145"/>
        <dbReference type="EC" id="2.3.1.251"/>
    </reaction>
</comment>
<comment type="subunit">
    <text evidence="1">Homodimer.</text>
</comment>
<comment type="subcellular location">
    <subcellularLocation>
        <location evidence="1">Cell outer membrane</location>
    </subcellularLocation>
</comment>
<comment type="similarity">
    <text evidence="1">Belongs to the lipid A palmitoyltransferase family.</text>
</comment>
<name>PAGP_LEGLN</name>
<dbReference type="EC" id="2.3.1.251" evidence="1"/>
<dbReference type="EMBL" id="FN650140">
    <property type="protein sequence ID" value="CBJ10376.1"/>
    <property type="molecule type" value="Genomic_DNA"/>
</dbReference>
<dbReference type="RefSeq" id="WP_003633776.1">
    <property type="nucleotide sequence ID" value="NC_013861.1"/>
</dbReference>
<dbReference type="SMR" id="D3HNB4"/>
<dbReference type="STRING" id="661367.LLO_0052"/>
<dbReference type="GeneID" id="40924281"/>
<dbReference type="KEGG" id="llo:LLO_0052"/>
<dbReference type="eggNOG" id="ENOG502Z7SY">
    <property type="taxonomic scope" value="Bacteria"/>
</dbReference>
<dbReference type="HOGENOM" id="CLU_104099_0_1_6"/>
<dbReference type="OrthoDB" id="9156803at2"/>
<dbReference type="Proteomes" id="UP000001060">
    <property type="component" value="Chromosome"/>
</dbReference>
<dbReference type="GO" id="GO:0009279">
    <property type="term" value="C:cell outer membrane"/>
    <property type="evidence" value="ECO:0007669"/>
    <property type="project" value="UniProtKB-SubCell"/>
</dbReference>
<dbReference type="GO" id="GO:0016746">
    <property type="term" value="F:acyltransferase activity"/>
    <property type="evidence" value="ECO:0007669"/>
    <property type="project" value="UniProtKB-UniRule"/>
</dbReference>
<dbReference type="GO" id="GO:0009245">
    <property type="term" value="P:lipid A biosynthetic process"/>
    <property type="evidence" value="ECO:0007669"/>
    <property type="project" value="UniProtKB-UniRule"/>
</dbReference>
<dbReference type="Gene3D" id="2.40.160.20">
    <property type="match status" value="1"/>
</dbReference>
<dbReference type="HAMAP" id="MF_00837">
    <property type="entry name" value="PagP_transferase"/>
    <property type="match status" value="1"/>
</dbReference>
<dbReference type="InterPro" id="IPR009746">
    <property type="entry name" value="LipidA_acyl_PagP"/>
</dbReference>
<dbReference type="InterPro" id="IPR011250">
    <property type="entry name" value="OMP/PagP_b-brl"/>
</dbReference>
<dbReference type="NCBIfam" id="NF008271">
    <property type="entry name" value="PRK11045.1"/>
    <property type="match status" value="1"/>
</dbReference>
<dbReference type="Pfam" id="PF07017">
    <property type="entry name" value="PagP"/>
    <property type="match status" value="1"/>
</dbReference>
<dbReference type="SUPFAM" id="SSF56925">
    <property type="entry name" value="OMPA-like"/>
    <property type="match status" value="1"/>
</dbReference>
<gene>
    <name evidence="1" type="primary">pagP</name>
    <name type="ordered locus">LLO_0052</name>
</gene>
<sequence length="231" mass="25895">MNKLTVRNFIVGLLIVFSLNSFSSPPSISNSSSNSIDENSPINTFKISPDNQTSKKSDLATEEPKGCKYWLSLFKPVCHRLHQVWTEGHTDLYLSGYAWHNRFTYSAERIREKKYNELAWGGGLGKGFFDEKGNWHGLYAFAFLDSHRNVEPTAGYAYLRVANITKEFKAGLGFSVLVTARPDIFHNIPFPGAVPWAGIFYKKLSVKAAYIPGSSTNGNVLYVVGTYSFDK</sequence>
<keyword id="KW-0012">Acyltransferase</keyword>
<keyword id="KW-0998">Cell outer membrane</keyword>
<keyword id="KW-0472">Membrane</keyword>
<keyword id="KW-1185">Reference proteome</keyword>
<keyword id="KW-0732">Signal</keyword>
<keyword id="KW-0808">Transferase</keyword>
<organism>
    <name type="scientific">Legionella longbeachae serogroup 1 (strain NSW150)</name>
    <dbReference type="NCBI Taxonomy" id="661367"/>
    <lineage>
        <taxon>Bacteria</taxon>
        <taxon>Pseudomonadati</taxon>
        <taxon>Pseudomonadota</taxon>
        <taxon>Gammaproteobacteria</taxon>
        <taxon>Legionellales</taxon>
        <taxon>Legionellaceae</taxon>
        <taxon>Legionella</taxon>
    </lineage>
</organism>
<proteinExistence type="inferred from homology"/>
<protein>
    <recommendedName>
        <fullName evidence="1">Lipid A acyltransferase PagP</fullName>
        <ecNumber evidence="1">2.3.1.251</ecNumber>
    </recommendedName>
    <alternativeName>
        <fullName evidence="1">Lipid A acylation protein</fullName>
    </alternativeName>
</protein>